<accession>B6YV11</accession>
<reference key="1">
    <citation type="journal article" date="2008" name="J. Bacteriol.">
        <title>The complete genome sequence of Thermococcus onnurineus NA1 reveals a mixed heterotrophic and carboxydotrophic metabolism.</title>
        <authorList>
            <person name="Lee H.S."/>
            <person name="Kang S.G."/>
            <person name="Bae S.S."/>
            <person name="Lim J.K."/>
            <person name="Cho Y."/>
            <person name="Kim Y.J."/>
            <person name="Jeon J.H."/>
            <person name="Cha S.-S."/>
            <person name="Kwon K.K."/>
            <person name="Kim H.-T."/>
            <person name="Park C.-J."/>
            <person name="Lee H.-W."/>
            <person name="Kim S.I."/>
            <person name="Chun J."/>
            <person name="Colwell R.R."/>
            <person name="Kim S.-J."/>
            <person name="Lee J.-H."/>
        </authorList>
    </citation>
    <scope>NUCLEOTIDE SEQUENCE [LARGE SCALE GENOMIC DNA]</scope>
    <source>
        <strain>NA1</strain>
    </source>
</reference>
<protein>
    <recommendedName>
        <fullName evidence="1">A-type ATP synthase subunit E</fullName>
    </recommendedName>
</protein>
<dbReference type="EMBL" id="CP000855">
    <property type="protein sequence ID" value="ACJ17239.1"/>
    <property type="molecule type" value="Genomic_DNA"/>
</dbReference>
<dbReference type="RefSeq" id="WP_012572711.1">
    <property type="nucleotide sequence ID" value="NC_011529.1"/>
</dbReference>
<dbReference type="SMR" id="B6YV11"/>
<dbReference type="STRING" id="523850.TON_1749"/>
<dbReference type="GeneID" id="7017418"/>
<dbReference type="KEGG" id="ton:TON_1749"/>
<dbReference type="PATRIC" id="fig|523850.10.peg.1762"/>
<dbReference type="eggNOG" id="arCOG00869">
    <property type="taxonomic scope" value="Archaea"/>
</dbReference>
<dbReference type="HOGENOM" id="CLU_105846_1_0_2"/>
<dbReference type="OrthoDB" id="4691at2157"/>
<dbReference type="Proteomes" id="UP000002727">
    <property type="component" value="Chromosome"/>
</dbReference>
<dbReference type="GO" id="GO:0005886">
    <property type="term" value="C:plasma membrane"/>
    <property type="evidence" value="ECO:0007669"/>
    <property type="project" value="UniProtKB-SubCell"/>
</dbReference>
<dbReference type="GO" id="GO:0033178">
    <property type="term" value="C:proton-transporting two-sector ATPase complex, catalytic domain"/>
    <property type="evidence" value="ECO:0007669"/>
    <property type="project" value="InterPro"/>
</dbReference>
<dbReference type="GO" id="GO:0005524">
    <property type="term" value="F:ATP binding"/>
    <property type="evidence" value="ECO:0007669"/>
    <property type="project" value="UniProtKB-UniRule"/>
</dbReference>
<dbReference type="GO" id="GO:0046933">
    <property type="term" value="F:proton-transporting ATP synthase activity, rotational mechanism"/>
    <property type="evidence" value="ECO:0007669"/>
    <property type="project" value="UniProtKB-UniRule"/>
</dbReference>
<dbReference type="GO" id="GO:0046961">
    <property type="term" value="F:proton-transporting ATPase activity, rotational mechanism"/>
    <property type="evidence" value="ECO:0007669"/>
    <property type="project" value="InterPro"/>
</dbReference>
<dbReference type="GO" id="GO:0042777">
    <property type="term" value="P:proton motive force-driven plasma membrane ATP synthesis"/>
    <property type="evidence" value="ECO:0007669"/>
    <property type="project" value="UniProtKB-UniRule"/>
</dbReference>
<dbReference type="CDD" id="cd06503">
    <property type="entry name" value="ATP-synt_Fo_b"/>
    <property type="match status" value="1"/>
</dbReference>
<dbReference type="Gene3D" id="3.30.2320.30">
    <property type="entry name" value="ATP synthase, E subunit, C-terminal"/>
    <property type="match status" value="1"/>
</dbReference>
<dbReference type="Gene3D" id="1.20.5.620">
    <property type="entry name" value="F1F0 ATP synthase subunit B, membrane domain"/>
    <property type="match status" value="1"/>
</dbReference>
<dbReference type="HAMAP" id="MF_00311">
    <property type="entry name" value="ATP_synth_E_arch"/>
    <property type="match status" value="1"/>
</dbReference>
<dbReference type="InterPro" id="IPR038495">
    <property type="entry name" value="ATPase_E_C"/>
</dbReference>
<dbReference type="InterPro" id="IPR002842">
    <property type="entry name" value="ATPase_V1_Esu"/>
</dbReference>
<dbReference type="NCBIfam" id="NF003049">
    <property type="entry name" value="PRK03963.1"/>
    <property type="match status" value="1"/>
</dbReference>
<dbReference type="PANTHER" id="PTHR45715">
    <property type="entry name" value="ATPASE H+-TRANSPORTING V1 SUBUNIT E1A-RELATED"/>
    <property type="match status" value="1"/>
</dbReference>
<dbReference type="Pfam" id="PF01991">
    <property type="entry name" value="vATP-synt_E"/>
    <property type="match status" value="1"/>
</dbReference>
<dbReference type="SUPFAM" id="SSF160527">
    <property type="entry name" value="V-type ATPase subunit E-like"/>
    <property type="match status" value="1"/>
</dbReference>
<feature type="chain" id="PRO_1000115681" description="A-type ATP synthase subunit E">
    <location>
        <begin position="1"/>
        <end position="203"/>
    </location>
</feature>
<evidence type="ECO:0000255" key="1">
    <source>
        <dbReference type="HAMAP-Rule" id="MF_00311"/>
    </source>
</evidence>
<name>AATE_THEON</name>
<proteinExistence type="inferred from homology"/>
<organism>
    <name type="scientific">Thermococcus onnurineus (strain NA1)</name>
    <dbReference type="NCBI Taxonomy" id="523850"/>
    <lineage>
        <taxon>Archaea</taxon>
        <taxon>Methanobacteriati</taxon>
        <taxon>Methanobacteriota</taxon>
        <taxon>Thermococci</taxon>
        <taxon>Thermococcales</taxon>
        <taxon>Thermococcaceae</taxon>
        <taxon>Thermococcus</taxon>
    </lineage>
</organism>
<gene>
    <name evidence="1" type="primary">atpE</name>
    <name type="ordered locus">TON_1749</name>
</gene>
<keyword id="KW-0066">ATP synthesis</keyword>
<keyword id="KW-1003">Cell membrane</keyword>
<keyword id="KW-0375">Hydrogen ion transport</keyword>
<keyword id="KW-0406">Ion transport</keyword>
<keyword id="KW-0472">Membrane</keyword>
<keyword id="KW-0813">Transport</keyword>
<comment type="function">
    <text evidence="1">Component of the A-type ATP synthase that produces ATP from ADP in the presence of a proton gradient across the membrane.</text>
</comment>
<comment type="subunit">
    <text evidence="1">Has multiple subunits with at least A(3), B(3), C, D, E, F, H, I and proteolipid K(x).</text>
</comment>
<comment type="subcellular location">
    <subcellularLocation>
        <location evidence="1">Cell membrane</location>
        <topology evidence="1">Peripheral membrane protein</topology>
    </subcellularLocation>
</comment>
<comment type="similarity">
    <text evidence="1">Belongs to the V-ATPase E subunit family.</text>
</comment>
<sequence>MEGAELIIQEINREAEQKIQYILSEAQKEAEKIREEARKRAQARAEWILRKAQTQAEIEKQRIIANAKLEIRKKRLEVQEALIQEVITALRERLAELPEEEYFPMLVDLTGKAVEELGSGSVVVKSNERTLKLLEGRLDEFKKALTEKLGRDVEVTLGEPITTIGGILVETPDRTVRVDNTFESRIERFEGELRAAIAKALFG</sequence>